<name>KCY_SALRD</name>
<keyword id="KW-0067">ATP-binding</keyword>
<keyword id="KW-0963">Cytoplasm</keyword>
<keyword id="KW-0418">Kinase</keyword>
<keyword id="KW-0547">Nucleotide-binding</keyword>
<keyword id="KW-1185">Reference proteome</keyword>
<keyword id="KW-0808">Transferase</keyword>
<evidence type="ECO:0000255" key="1">
    <source>
        <dbReference type="HAMAP-Rule" id="MF_00238"/>
    </source>
</evidence>
<organism>
    <name type="scientific">Salinibacter ruber (strain DSM 13855 / M31)</name>
    <dbReference type="NCBI Taxonomy" id="309807"/>
    <lineage>
        <taxon>Bacteria</taxon>
        <taxon>Pseudomonadati</taxon>
        <taxon>Rhodothermota</taxon>
        <taxon>Rhodothermia</taxon>
        <taxon>Rhodothermales</taxon>
        <taxon>Salinibacteraceae</taxon>
        <taxon>Salinibacter</taxon>
    </lineage>
</organism>
<reference key="1">
    <citation type="journal article" date="2005" name="Proc. Natl. Acad. Sci. U.S.A.">
        <title>The genome of Salinibacter ruber: convergence and gene exchange among hyperhalophilic bacteria and archaea.</title>
        <authorList>
            <person name="Mongodin E.F."/>
            <person name="Nelson K.E."/>
            <person name="Daugherty S."/>
            <person name="DeBoy R.T."/>
            <person name="Wister J."/>
            <person name="Khouri H."/>
            <person name="Weidman J."/>
            <person name="Walsh D.A."/>
            <person name="Papke R.T."/>
            <person name="Sanchez Perez G."/>
            <person name="Sharma A.K."/>
            <person name="Nesbo C.L."/>
            <person name="MacLeod D."/>
            <person name="Bapteste E."/>
            <person name="Doolittle W.F."/>
            <person name="Charlebois R.L."/>
            <person name="Legault B."/>
            <person name="Rodriguez-Valera F."/>
        </authorList>
    </citation>
    <scope>NUCLEOTIDE SEQUENCE [LARGE SCALE GENOMIC DNA]</scope>
    <source>
        <strain>DSM 13855 / CECT 5946 / M31</strain>
    </source>
</reference>
<proteinExistence type="inferred from homology"/>
<gene>
    <name evidence="1" type="primary">cmk</name>
    <name type="ordered locus">SRU_1788</name>
</gene>
<accession>Q2S1M6</accession>
<sequence length="227" mass="25011">MIVTIDGPAGSGKSTTAQRAAARLEYVYLDTGAMYRAVALGFLRAEAPATRSGAEAVLPSLTVDVEYRGDTMQVFLGDDAVTDRIRSAEVGRVVSDISTLAPVREYMVEQQRRIGRAQADRHGGVVLDGRDTGTVVFPKAPVKIFMVADIDERARRRLQEYEAAGEEVTFEEVRAEIEQRDQQDRTRDIAPLRRADDAIVFDTTDCTIAEQVDFVVDRVKAQDGRGT</sequence>
<comment type="catalytic activity">
    <reaction evidence="1">
        <text>CMP + ATP = CDP + ADP</text>
        <dbReference type="Rhea" id="RHEA:11600"/>
        <dbReference type="ChEBI" id="CHEBI:30616"/>
        <dbReference type="ChEBI" id="CHEBI:58069"/>
        <dbReference type="ChEBI" id="CHEBI:60377"/>
        <dbReference type="ChEBI" id="CHEBI:456216"/>
        <dbReference type="EC" id="2.7.4.25"/>
    </reaction>
</comment>
<comment type="catalytic activity">
    <reaction evidence="1">
        <text>dCMP + ATP = dCDP + ADP</text>
        <dbReference type="Rhea" id="RHEA:25094"/>
        <dbReference type="ChEBI" id="CHEBI:30616"/>
        <dbReference type="ChEBI" id="CHEBI:57566"/>
        <dbReference type="ChEBI" id="CHEBI:58593"/>
        <dbReference type="ChEBI" id="CHEBI:456216"/>
        <dbReference type="EC" id="2.7.4.25"/>
    </reaction>
</comment>
<comment type="subcellular location">
    <subcellularLocation>
        <location evidence="1">Cytoplasm</location>
    </subcellularLocation>
</comment>
<comment type="similarity">
    <text evidence="1">Belongs to the cytidylate kinase family. Type 1 subfamily.</text>
</comment>
<feature type="chain" id="PRO_1000048270" description="Cytidylate kinase">
    <location>
        <begin position="1"/>
        <end position="227"/>
    </location>
</feature>
<feature type="binding site" evidence="1">
    <location>
        <begin position="7"/>
        <end position="15"/>
    </location>
    <ligand>
        <name>ATP</name>
        <dbReference type="ChEBI" id="CHEBI:30616"/>
    </ligand>
</feature>
<protein>
    <recommendedName>
        <fullName evidence="1">Cytidylate kinase</fullName>
        <shortName evidence="1">CK</shortName>
        <ecNumber evidence="1">2.7.4.25</ecNumber>
    </recommendedName>
    <alternativeName>
        <fullName evidence="1">Cytidine monophosphate kinase</fullName>
        <shortName evidence="1">CMP kinase</shortName>
    </alternativeName>
</protein>
<dbReference type="EC" id="2.7.4.25" evidence="1"/>
<dbReference type="EMBL" id="CP000159">
    <property type="protein sequence ID" value="ABC43865.1"/>
    <property type="molecule type" value="Genomic_DNA"/>
</dbReference>
<dbReference type="RefSeq" id="WP_011404530.1">
    <property type="nucleotide sequence ID" value="NC_007677.1"/>
</dbReference>
<dbReference type="RefSeq" id="YP_445905.1">
    <property type="nucleotide sequence ID" value="NC_007677.1"/>
</dbReference>
<dbReference type="SMR" id="Q2S1M6"/>
<dbReference type="STRING" id="309807.SRU_1788"/>
<dbReference type="EnsemblBacteria" id="ABC43865">
    <property type="protein sequence ID" value="ABC43865"/>
    <property type="gene ID" value="SRU_1788"/>
</dbReference>
<dbReference type="GeneID" id="83728717"/>
<dbReference type="KEGG" id="sru:SRU_1788"/>
<dbReference type="PATRIC" id="fig|309807.25.peg.1858"/>
<dbReference type="eggNOG" id="COG0283">
    <property type="taxonomic scope" value="Bacteria"/>
</dbReference>
<dbReference type="HOGENOM" id="CLU_079959_0_2_10"/>
<dbReference type="OrthoDB" id="9807434at2"/>
<dbReference type="Proteomes" id="UP000008674">
    <property type="component" value="Chromosome"/>
</dbReference>
<dbReference type="GO" id="GO:0005737">
    <property type="term" value="C:cytoplasm"/>
    <property type="evidence" value="ECO:0007669"/>
    <property type="project" value="UniProtKB-SubCell"/>
</dbReference>
<dbReference type="GO" id="GO:0005524">
    <property type="term" value="F:ATP binding"/>
    <property type="evidence" value="ECO:0007669"/>
    <property type="project" value="UniProtKB-UniRule"/>
</dbReference>
<dbReference type="GO" id="GO:0036430">
    <property type="term" value="F:CMP kinase activity"/>
    <property type="evidence" value="ECO:0007669"/>
    <property type="project" value="RHEA"/>
</dbReference>
<dbReference type="GO" id="GO:0036431">
    <property type="term" value="F:dCMP kinase activity"/>
    <property type="evidence" value="ECO:0007669"/>
    <property type="project" value="RHEA"/>
</dbReference>
<dbReference type="GO" id="GO:0006220">
    <property type="term" value="P:pyrimidine nucleotide metabolic process"/>
    <property type="evidence" value="ECO:0007669"/>
    <property type="project" value="UniProtKB-UniRule"/>
</dbReference>
<dbReference type="CDD" id="cd02020">
    <property type="entry name" value="CMPK"/>
    <property type="match status" value="1"/>
</dbReference>
<dbReference type="Gene3D" id="3.40.50.300">
    <property type="entry name" value="P-loop containing nucleotide triphosphate hydrolases"/>
    <property type="match status" value="1"/>
</dbReference>
<dbReference type="HAMAP" id="MF_00238">
    <property type="entry name" value="Cytidyl_kinase_type1"/>
    <property type="match status" value="1"/>
</dbReference>
<dbReference type="InterPro" id="IPR003136">
    <property type="entry name" value="Cytidylate_kin"/>
</dbReference>
<dbReference type="InterPro" id="IPR011994">
    <property type="entry name" value="Cytidylate_kinase_dom"/>
</dbReference>
<dbReference type="InterPro" id="IPR027417">
    <property type="entry name" value="P-loop_NTPase"/>
</dbReference>
<dbReference type="NCBIfam" id="TIGR00017">
    <property type="entry name" value="cmk"/>
    <property type="match status" value="1"/>
</dbReference>
<dbReference type="Pfam" id="PF02224">
    <property type="entry name" value="Cytidylate_kin"/>
    <property type="match status" value="1"/>
</dbReference>
<dbReference type="SUPFAM" id="SSF52540">
    <property type="entry name" value="P-loop containing nucleoside triphosphate hydrolases"/>
    <property type="match status" value="1"/>
</dbReference>